<comment type="catalytic activity">
    <reaction>
        <text>an acyl phosphate + H2O = a carboxylate + phosphate + H(+)</text>
        <dbReference type="Rhea" id="RHEA:14965"/>
        <dbReference type="ChEBI" id="CHEBI:15377"/>
        <dbReference type="ChEBI" id="CHEBI:15378"/>
        <dbReference type="ChEBI" id="CHEBI:29067"/>
        <dbReference type="ChEBI" id="CHEBI:43474"/>
        <dbReference type="ChEBI" id="CHEBI:59918"/>
        <dbReference type="EC" id="3.6.1.7"/>
    </reaction>
</comment>
<comment type="similarity">
    <text evidence="2">Belongs to the acylphosphatase family.</text>
</comment>
<name>ACYP_SHEON</name>
<feature type="chain" id="PRO_0000326800" description="Acylphosphatase">
    <location>
        <begin position="1"/>
        <end position="90"/>
    </location>
</feature>
<feature type="domain" description="Acylphosphatase-like" evidence="1">
    <location>
        <begin position="3"/>
        <end position="90"/>
    </location>
</feature>
<feature type="active site" evidence="1">
    <location>
        <position position="18"/>
    </location>
</feature>
<feature type="active site" evidence="1">
    <location>
        <position position="36"/>
    </location>
</feature>
<keyword id="KW-0378">Hydrolase</keyword>
<keyword id="KW-1185">Reference proteome</keyword>
<organism>
    <name type="scientific">Shewanella oneidensis (strain ATCC 700550 / JCM 31522 / CIP 106686 / LMG 19005 / NCIMB 14063 / MR-1)</name>
    <dbReference type="NCBI Taxonomy" id="211586"/>
    <lineage>
        <taxon>Bacteria</taxon>
        <taxon>Pseudomonadati</taxon>
        <taxon>Pseudomonadota</taxon>
        <taxon>Gammaproteobacteria</taxon>
        <taxon>Alteromonadales</taxon>
        <taxon>Shewanellaceae</taxon>
        <taxon>Shewanella</taxon>
    </lineage>
</organism>
<accession>Q8EEW0</accession>
<sequence length="90" mass="9696">MKRVLIKLTGKVQGVGCRRTTLAKARVLGVTGYVTNCVDGSVEVLAQGSHVAVDNLIAWCQAGVPCTVGLRVDVEEYQGDDIYLDFSIVR</sequence>
<proteinExistence type="inferred from homology"/>
<evidence type="ECO:0000255" key="1">
    <source>
        <dbReference type="PROSITE-ProRule" id="PRU00520"/>
    </source>
</evidence>
<evidence type="ECO:0000305" key="2"/>
<protein>
    <recommendedName>
        <fullName>Acylphosphatase</fullName>
        <ecNumber>3.6.1.7</ecNumber>
    </recommendedName>
    <alternativeName>
        <fullName>Acylphosphate phosphohydrolase</fullName>
    </alternativeName>
</protein>
<gene>
    <name type="primary">acyP</name>
    <name type="ordered locus">SO_2253</name>
</gene>
<dbReference type="EC" id="3.6.1.7"/>
<dbReference type="EMBL" id="AE014299">
    <property type="protein sequence ID" value="AAN55293.1"/>
    <property type="molecule type" value="Genomic_DNA"/>
</dbReference>
<dbReference type="RefSeq" id="NP_717849.1">
    <property type="nucleotide sequence ID" value="NC_004347.2"/>
</dbReference>
<dbReference type="RefSeq" id="WP_011072265.1">
    <property type="nucleotide sequence ID" value="NC_004347.2"/>
</dbReference>
<dbReference type="SMR" id="Q8EEW0"/>
<dbReference type="STRING" id="211586.SO_2253"/>
<dbReference type="PaxDb" id="211586-SO_2253"/>
<dbReference type="KEGG" id="son:SO_2253"/>
<dbReference type="PATRIC" id="fig|211586.12.peg.2168"/>
<dbReference type="eggNOG" id="COG1254">
    <property type="taxonomic scope" value="Bacteria"/>
</dbReference>
<dbReference type="HOGENOM" id="CLU_141932_1_1_6"/>
<dbReference type="OrthoDB" id="5295388at2"/>
<dbReference type="PhylomeDB" id="Q8EEW0"/>
<dbReference type="BioCyc" id="SONE211586:G1GMP-2057-MONOMER"/>
<dbReference type="Proteomes" id="UP000008186">
    <property type="component" value="Chromosome"/>
</dbReference>
<dbReference type="GO" id="GO:0003998">
    <property type="term" value="F:acylphosphatase activity"/>
    <property type="evidence" value="ECO:0007669"/>
    <property type="project" value="UniProtKB-EC"/>
</dbReference>
<dbReference type="FunFam" id="3.30.70.100:FF:000171">
    <property type="match status" value="1"/>
</dbReference>
<dbReference type="Gene3D" id="3.30.70.100">
    <property type="match status" value="1"/>
</dbReference>
<dbReference type="InterPro" id="IPR020456">
    <property type="entry name" value="Acylphosphatase"/>
</dbReference>
<dbReference type="InterPro" id="IPR001792">
    <property type="entry name" value="Acylphosphatase-like_dom"/>
</dbReference>
<dbReference type="InterPro" id="IPR036046">
    <property type="entry name" value="Acylphosphatase-like_dom_sf"/>
</dbReference>
<dbReference type="NCBIfam" id="NF011003">
    <property type="entry name" value="PRK14429.1"/>
    <property type="match status" value="1"/>
</dbReference>
<dbReference type="PANTHER" id="PTHR47268">
    <property type="entry name" value="ACYLPHOSPHATASE"/>
    <property type="match status" value="1"/>
</dbReference>
<dbReference type="PANTHER" id="PTHR47268:SF4">
    <property type="entry name" value="ACYLPHOSPHATASE"/>
    <property type="match status" value="1"/>
</dbReference>
<dbReference type="Pfam" id="PF00708">
    <property type="entry name" value="Acylphosphatase"/>
    <property type="match status" value="1"/>
</dbReference>
<dbReference type="SUPFAM" id="SSF54975">
    <property type="entry name" value="Acylphosphatase/BLUF domain-like"/>
    <property type="match status" value="1"/>
</dbReference>
<dbReference type="PROSITE" id="PS51160">
    <property type="entry name" value="ACYLPHOSPHATASE_3"/>
    <property type="match status" value="1"/>
</dbReference>
<reference key="1">
    <citation type="journal article" date="2002" name="Nat. Biotechnol.">
        <title>Genome sequence of the dissimilatory metal ion-reducing bacterium Shewanella oneidensis.</title>
        <authorList>
            <person name="Heidelberg J.F."/>
            <person name="Paulsen I.T."/>
            <person name="Nelson K.E."/>
            <person name="Gaidos E.J."/>
            <person name="Nelson W.C."/>
            <person name="Read T.D."/>
            <person name="Eisen J.A."/>
            <person name="Seshadri R."/>
            <person name="Ward N.L."/>
            <person name="Methe B.A."/>
            <person name="Clayton R.A."/>
            <person name="Meyer T."/>
            <person name="Tsapin A."/>
            <person name="Scott J."/>
            <person name="Beanan M.J."/>
            <person name="Brinkac L.M."/>
            <person name="Daugherty S.C."/>
            <person name="DeBoy R.T."/>
            <person name="Dodson R.J."/>
            <person name="Durkin A.S."/>
            <person name="Haft D.H."/>
            <person name="Kolonay J.F."/>
            <person name="Madupu R."/>
            <person name="Peterson J.D."/>
            <person name="Umayam L.A."/>
            <person name="White O."/>
            <person name="Wolf A.M."/>
            <person name="Vamathevan J.J."/>
            <person name="Weidman J.F."/>
            <person name="Impraim M."/>
            <person name="Lee K."/>
            <person name="Berry K.J."/>
            <person name="Lee C."/>
            <person name="Mueller J."/>
            <person name="Khouri H.M."/>
            <person name="Gill J."/>
            <person name="Utterback T.R."/>
            <person name="McDonald L.A."/>
            <person name="Feldblyum T.V."/>
            <person name="Smith H.O."/>
            <person name="Venter J.C."/>
            <person name="Nealson K.H."/>
            <person name="Fraser C.M."/>
        </authorList>
    </citation>
    <scope>NUCLEOTIDE SEQUENCE [LARGE SCALE GENOMIC DNA]</scope>
    <source>
        <strain>ATCC 700550 / JCM 31522 / CIP 106686 / LMG 19005 / NCIMB 14063 / MR-1</strain>
    </source>
</reference>